<sequence>MASHNVMNLARDVKSAAVRDREKAVDELSHLLNPRNRSTNLSDLGDKSYHEIFEAIFSFVLREKPVLSDRKKSQATLNSTATRLSKCAEAVRMTVGRGNSKIGRKTLLAIVDHITQVLPGPNGDDFVTPLLQDYIKALTEVLSRPAHVEILARKGGQHWETCVGFFLDVAQYLLPDEADISTLSLARASPALTRSSPAPGSGYSRSGGRSTPSTQSQRRAAPGEGGLLKDVLEGLHYIVIGGNAPILRQYKDITLVVLRVLSLKQLSLGSLQTLAFAIINTVFTTTNADDLAHASSVVQSILPLMSYWWRCEKVSQDEVIRALRIEISRSIFLMHLHIENLVINSSDEKIRSDLEELTENIWSEYSRRSEAFRLQMSDITFALSSLPTYGLQLNMFGLRAHNVYGEGHWAVIQNLAFLEGIMLLPQSRTPADDAEQSEQRRKRRRIEQDMSRIRLKLKTVEVGVRGTALQLIPFLLADNSLSRDELVDLLPELALLATDKNPVTASWALIASASCISKPEVCHDQIDVWRQLWHFATRSVSLPGTSRAASVLLHAILEADVLPYHTISQDINNMVTTADVNGPSVLCDTSISLMFHVLQLRNARVPSASQSTCHHIIRWVFLRWNPNESTFASYHSMHAQPIQLVNLIRACCGTTALELNSHQAAPGGPLTETWSSFKQTEKFTRYVLLAKDEFHDADPIGCCDLSEQSDPASLVDANSRYASRKLTLELFYPKLSELSDLCTSWNKKPNEGGIQISFDRFQSLLSACLAGTLLLPIFGDLNSTQSSSVDSTLKYILDKALNSALTSVEPTAFVDSVLRVVRAVMPDMITSSLNRIQANNPDLFHLFGRIWKSIGQQKDQTDPDNNIDLMDIDEDFDSQSSRASSVHAPVAAPRFNIQMKLDMQTFYIETKARLRFLSILDSDFGQIGLVPDTYVDHLIKMPDEDLLMCQSLLLELFGSDLVITPENALSIIERLGDCISLSEYQCAEVALSTCIGVIDGLHSIWLNDKQHLSERVGDLYYHFIKVCLTSNIFSPGVQMSMVQLLFTLLRTNTEYGKDQGLDSPRTCLLYILKNGPMSVKYTISQKIADIFDLFVLKLHDEVFVDVLDSLPTDPLDTTGIAFRLLVLSNLACRWSTLLRRCTYHIFETPGKIPRSTDYATRCLVNVSRTLNLESPKALFRLFSRQLLYTWLEYDHIEDIPFSIFGFKTLGDLLKSAQSEAIGLTVMRGQDQTFAEVCHLLGSSESDLVRENFTTAVAYSMIFGDSNGGDDKERGEAHVKRLLGRAAYMELIYINFVDIAALFFDLIDQENSFERVFARFKLDYAGQILSAVKAISHSPAELPANQQPMFKAKYLINELHRLCQNTEFQFHDLWTPPVVVSIARKLLNTVHPALGPLHACSVLRKVRVLISLGGSVALESYPLEMLLNATRTFITDSECADDALGISQYLLAEGARHLSNVPSFLAGYALSTLASLRVFLESSQSSTTQESQFKATMSKAEKFHVWISKYLEEYESPMFKNLEQRSAFKSITRSAARIRSSGNAERGTAESKLLLDILADQAADHQLLNEPSRQLALGLLCGDFSIPETIKDDVIESDEDALKYSTAVWKSCDTENLSEEYLSWAGRVVGRAFSASGEIPTGVLRESNLSQYQKMAPGSNGSETGILYLLQDLTSNPDSITAGLAEAALRSIVSDANNLDDELLAVACQKSLTESLLVTSQWGTHRSPPSDKGLITPTSSPNQLDVWSTDITSKDWLLNLSAHLARYVPESIVLSVLAPILARVEHFAERAFPFVVHLALFFTRNQQHSPKRQLSVAIKSWLECTVTEAKENQKLLINMLLYLRTQQYPKESSIADRSHWLEVDSALVAAAASRCGMYKTSLLFVEYVPPETSRSSRTSSAATKEVDMSETLLAIFENIDDPDAYYGLPEEPSLSKILARVEYENDGPMSLAFRGAEYDSNVHLGNPMAQSDGQALVRAFSTLGLSGPSNWFLQTQDNMETSPPVLEDTFNTARKLGIWNLPAPPSDHHAVTVFKAYQSIHQATDIANVRAAVHDGFGRTMSSLVVHSLNATALRKRLGALASLTELDDVLGVSDSSEMNLLIEKFKNRSGWMRSGLYESVGQILSCRSTTMSMVSQQETLRTNIKLSAATARQMEVESMITASQIYRYHQATQESLKISTILTKLIPSCTALDLHVDAAVTIEAANSAWDYGQMSTSIRMLQDIDKDSVLEKQTLPVSRSDLLSKIGYQVSVARLEKPHDIQKNYLEPALKELKGKGQGRQAGSVFHQFAMFCDQQLQDPDGLEDLARLQSLKKAKSDEVSELKTLISGTRDTQLKTRYSHVLNKEKQWLNLDEQELRRVEQTRSEFVRLSLENYLLSLIASDEHNNDALRFTALWLERSEEESTNQAVMRHLSEVPTRKFAGLTNQLTSRLQDNNTTFQKLLLELVYKICVDHPYHGMYQIWSGTKAKAQQKDDVAVLRVRATDRVAKSLAETQSVANIWLSIDKTSKYYHALAMDRNPNKYKSGVKIPLRDSTPGHNLVNCLAKYRIPSPTMHIELSATKDYSKVPIISKLEPTMTIASGVSAPKIITAVGSDGVRYKQLVKGGHDDLRQDAIMEQVFSAVSSLLKLHRITQQRNLSIRTYKVLPLTASSGLIEFVPNTIPLHEFLMPAHERYYPKDLKGSQCRKEIFGVQGRAVATRISTYRRMTEKFHPVMRYFFMENFMDPDEWFLKRLAYTRSTAAISMLGHVLGLGDRHGHNILLDHKTGEVVHIDLGVAFEAGRILPVPEMVPFRLTRDIVDGMGITKTEGVFRRCCEFTLDALREEQYSIMTILDVLRFDPLYTWSISPLRLAKLQKARHNDDSPMDDEQSEAETKKGKKAAGHVNEPSEADRALEVVRKKLSKTLSVTATVNDLINQATDERNLAVLYSGWAAYA</sequence>
<proteinExistence type="inferred from homology"/>
<keyword id="KW-0067">ATP-binding</keyword>
<keyword id="KW-0156">Chromatin regulator</keyword>
<keyword id="KW-0158">Chromosome</keyword>
<keyword id="KW-0227">DNA damage</keyword>
<keyword id="KW-0418">Kinase</keyword>
<keyword id="KW-0547">Nucleotide-binding</keyword>
<keyword id="KW-0539">Nucleus</keyword>
<keyword id="KW-1185">Reference proteome</keyword>
<keyword id="KW-0723">Serine/threonine-protein kinase</keyword>
<keyword id="KW-0779">Telomere</keyword>
<keyword id="KW-0808">Transferase</keyword>
<organism>
    <name type="scientific">Gibberella zeae (strain ATCC MYA-4620 / CBS 123657 / FGSC 9075 / NRRL 31084 / PH-1)</name>
    <name type="common">Wheat head blight fungus</name>
    <name type="synonym">Fusarium graminearum</name>
    <dbReference type="NCBI Taxonomy" id="229533"/>
    <lineage>
        <taxon>Eukaryota</taxon>
        <taxon>Fungi</taxon>
        <taxon>Dikarya</taxon>
        <taxon>Ascomycota</taxon>
        <taxon>Pezizomycotina</taxon>
        <taxon>Sordariomycetes</taxon>
        <taxon>Hypocreomycetidae</taxon>
        <taxon>Hypocreales</taxon>
        <taxon>Nectriaceae</taxon>
        <taxon>Fusarium</taxon>
    </lineage>
</organism>
<dbReference type="EC" id="2.7.11.1"/>
<dbReference type="EMBL" id="DS231665">
    <property type="protein sequence ID" value="ESU11490.1"/>
    <property type="status" value="ALT_SEQ"/>
    <property type="molecule type" value="Genomic_DNA"/>
</dbReference>
<dbReference type="EMBL" id="HG970334">
    <property type="protein sequence ID" value="CEF88615.1"/>
    <property type="molecule type" value="Genomic_DNA"/>
</dbReference>
<dbReference type="RefSeq" id="XP_011324066.1">
    <property type="nucleotide sequence ID" value="XM_011325764.1"/>
</dbReference>
<dbReference type="SMR" id="Q4IB89"/>
<dbReference type="STRING" id="229533.Q4IB89"/>
<dbReference type="GeneID" id="23552698"/>
<dbReference type="KEGG" id="fgr:FGSG_05519"/>
<dbReference type="VEuPathDB" id="FungiDB:FGRAMPH1_01G18115"/>
<dbReference type="eggNOG" id="KOG0892">
    <property type="taxonomic scope" value="Eukaryota"/>
</dbReference>
<dbReference type="HOGENOM" id="CLU_000178_8_2_1"/>
<dbReference type="InParanoid" id="Q4IB89"/>
<dbReference type="OrthoDB" id="101198at110618"/>
<dbReference type="PHI-base" id="PHI:1224"/>
<dbReference type="Proteomes" id="UP000070720">
    <property type="component" value="Chromosome 3"/>
</dbReference>
<dbReference type="GO" id="GO:0000781">
    <property type="term" value="C:chromosome, telomeric region"/>
    <property type="evidence" value="ECO:0007669"/>
    <property type="project" value="UniProtKB-SubCell"/>
</dbReference>
<dbReference type="GO" id="GO:0005634">
    <property type="term" value="C:nucleus"/>
    <property type="evidence" value="ECO:0007669"/>
    <property type="project" value="UniProtKB-SubCell"/>
</dbReference>
<dbReference type="GO" id="GO:0005524">
    <property type="term" value="F:ATP binding"/>
    <property type="evidence" value="ECO:0007669"/>
    <property type="project" value="UniProtKB-KW"/>
</dbReference>
<dbReference type="GO" id="GO:0106310">
    <property type="term" value="F:protein serine kinase activity"/>
    <property type="evidence" value="ECO:0007669"/>
    <property type="project" value="RHEA"/>
</dbReference>
<dbReference type="GO" id="GO:0004674">
    <property type="term" value="F:protein serine/threonine kinase activity"/>
    <property type="evidence" value="ECO:0007669"/>
    <property type="project" value="UniProtKB-KW"/>
</dbReference>
<dbReference type="GO" id="GO:0006325">
    <property type="term" value="P:chromatin organization"/>
    <property type="evidence" value="ECO:0007669"/>
    <property type="project" value="UniProtKB-KW"/>
</dbReference>
<dbReference type="GO" id="GO:0006281">
    <property type="term" value="P:DNA repair"/>
    <property type="evidence" value="ECO:0007669"/>
    <property type="project" value="InterPro"/>
</dbReference>
<dbReference type="GO" id="GO:0035556">
    <property type="term" value="P:intracellular signal transduction"/>
    <property type="evidence" value="ECO:0007669"/>
    <property type="project" value="UniProtKB-ARBA"/>
</dbReference>
<dbReference type="GO" id="GO:0019222">
    <property type="term" value="P:regulation of metabolic process"/>
    <property type="evidence" value="ECO:0007669"/>
    <property type="project" value="UniProtKB-ARBA"/>
</dbReference>
<dbReference type="CDD" id="cd05171">
    <property type="entry name" value="PIKKc_ATM"/>
    <property type="match status" value="1"/>
</dbReference>
<dbReference type="FunFam" id="3.30.1010.10:FF:000019">
    <property type="entry name" value="Serine/threonine-protein kinase Tel1"/>
    <property type="match status" value="1"/>
</dbReference>
<dbReference type="Gene3D" id="1.10.1070.11">
    <property type="entry name" value="Phosphatidylinositol 3-/4-kinase, catalytic domain"/>
    <property type="match status" value="1"/>
</dbReference>
<dbReference type="Gene3D" id="3.30.1010.10">
    <property type="entry name" value="Phosphatidylinositol 3-kinase Catalytic Subunit, Chain A, domain 4"/>
    <property type="match status" value="1"/>
</dbReference>
<dbReference type="InterPro" id="IPR038980">
    <property type="entry name" value="ATM_plant"/>
</dbReference>
<dbReference type="InterPro" id="IPR003152">
    <property type="entry name" value="FATC_dom"/>
</dbReference>
<dbReference type="InterPro" id="IPR011009">
    <property type="entry name" value="Kinase-like_dom_sf"/>
</dbReference>
<dbReference type="InterPro" id="IPR000403">
    <property type="entry name" value="PI3/4_kinase_cat_dom"/>
</dbReference>
<dbReference type="InterPro" id="IPR036940">
    <property type="entry name" value="PI3/4_kinase_cat_sf"/>
</dbReference>
<dbReference type="InterPro" id="IPR018936">
    <property type="entry name" value="PI3/4_kinase_CS"/>
</dbReference>
<dbReference type="InterPro" id="IPR003151">
    <property type="entry name" value="PIK-rel_kinase_FAT"/>
</dbReference>
<dbReference type="InterPro" id="IPR014009">
    <property type="entry name" value="PIK_FAT"/>
</dbReference>
<dbReference type="InterPro" id="IPR044107">
    <property type="entry name" value="PIKKc_ATM"/>
</dbReference>
<dbReference type="InterPro" id="IPR021668">
    <property type="entry name" value="TAN"/>
</dbReference>
<dbReference type="PANTHER" id="PTHR37079">
    <property type="entry name" value="SERINE/THREONINE-PROTEIN KINASE ATM"/>
    <property type="match status" value="1"/>
</dbReference>
<dbReference type="PANTHER" id="PTHR37079:SF4">
    <property type="entry name" value="SERINE_THREONINE-PROTEIN KINASE ATM"/>
    <property type="match status" value="1"/>
</dbReference>
<dbReference type="Pfam" id="PF02259">
    <property type="entry name" value="FAT"/>
    <property type="match status" value="1"/>
</dbReference>
<dbReference type="Pfam" id="PF02260">
    <property type="entry name" value="FATC"/>
    <property type="match status" value="1"/>
</dbReference>
<dbReference type="Pfam" id="PF00454">
    <property type="entry name" value="PI3_PI4_kinase"/>
    <property type="match status" value="1"/>
</dbReference>
<dbReference type="Pfam" id="PF11640">
    <property type="entry name" value="TAN"/>
    <property type="match status" value="1"/>
</dbReference>
<dbReference type="SMART" id="SM01343">
    <property type="entry name" value="FATC"/>
    <property type="match status" value="1"/>
</dbReference>
<dbReference type="SMART" id="SM00146">
    <property type="entry name" value="PI3Kc"/>
    <property type="match status" value="1"/>
</dbReference>
<dbReference type="SMART" id="SM01342">
    <property type="entry name" value="TAN"/>
    <property type="match status" value="1"/>
</dbReference>
<dbReference type="SUPFAM" id="SSF56112">
    <property type="entry name" value="Protein kinase-like (PK-like)"/>
    <property type="match status" value="1"/>
</dbReference>
<dbReference type="PROSITE" id="PS51189">
    <property type="entry name" value="FAT"/>
    <property type="match status" value="1"/>
</dbReference>
<dbReference type="PROSITE" id="PS51190">
    <property type="entry name" value="FATC"/>
    <property type="match status" value="1"/>
</dbReference>
<dbReference type="PROSITE" id="PS00915">
    <property type="entry name" value="PI3_4_KINASE_1"/>
    <property type="match status" value="1"/>
</dbReference>
<dbReference type="PROSITE" id="PS00916">
    <property type="entry name" value="PI3_4_KINASE_2"/>
    <property type="match status" value="1"/>
</dbReference>
<dbReference type="PROSITE" id="PS50290">
    <property type="entry name" value="PI3_4_KINASE_3"/>
    <property type="match status" value="1"/>
</dbReference>
<protein>
    <recommendedName>
        <fullName>Serine/threonine-protein kinase TEL1</fullName>
        <ecNumber>2.7.11.1</ecNumber>
    </recommendedName>
    <alternativeName>
        <fullName>ATM homolog</fullName>
    </alternativeName>
    <alternativeName>
        <fullName>DNA-damage checkpoint kinase TEL1</fullName>
    </alternativeName>
    <alternativeName>
        <fullName>Telomere length regulation protein 1</fullName>
    </alternativeName>
</protein>
<accession>Q4IB89</accession>
<accession>A0A098E3B7</accession>
<accession>A0A0E0SQA2</accession>
<accession>V6RHT9</accession>
<name>ATM_GIBZE</name>
<comment type="function">
    <text evidence="1">Serine/threonine protein kinase which activates checkpoint signaling upon genotoxic stresses such as ionizing radiation (IR), ultraviolet light (UV), or DNA replication stalling, thereby acting as a DNA damage sensor. Recognizes the substrate consensus sequence [ST]-Q. Phosphorylates histone H2A to form H2AS128ph (gamma-H2A) at sites of DNA damage, involved in the regulation of DNA damage response mechanism. Required for the control of telomere length and genome stability (By similarity).</text>
</comment>
<comment type="catalytic activity">
    <reaction>
        <text>L-seryl-[protein] + ATP = O-phospho-L-seryl-[protein] + ADP + H(+)</text>
        <dbReference type="Rhea" id="RHEA:17989"/>
        <dbReference type="Rhea" id="RHEA-COMP:9863"/>
        <dbReference type="Rhea" id="RHEA-COMP:11604"/>
        <dbReference type="ChEBI" id="CHEBI:15378"/>
        <dbReference type="ChEBI" id="CHEBI:29999"/>
        <dbReference type="ChEBI" id="CHEBI:30616"/>
        <dbReference type="ChEBI" id="CHEBI:83421"/>
        <dbReference type="ChEBI" id="CHEBI:456216"/>
        <dbReference type="EC" id="2.7.11.1"/>
    </reaction>
</comment>
<comment type="catalytic activity">
    <reaction>
        <text>L-threonyl-[protein] + ATP = O-phospho-L-threonyl-[protein] + ADP + H(+)</text>
        <dbReference type="Rhea" id="RHEA:46608"/>
        <dbReference type="Rhea" id="RHEA-COMP:11060"/>
        <dbReference type="Rhea" id="RHEA-COMP:11605"/>
        <dbReference type="ChEBI" id="CHEBI:15378"/>
        <dbReference type="ChEBI" id="CHEBI:30013"/>
        <dbReference type="ChEBI" id="CHEBI:30616"/>
        <dbReference type="ChEBI" id="CHEBI:61977"/>
        <dbReference type="ChEBI" id="CHEBI:456216"/>
        <dbReference type="EC" id="2.7.11.1"/>
    </reaction>
</comment>
<comment type="subunit">
    <text evidence="1">Associates with DNA double-strand breaks.</text>
</comment>
<comment type="subcellular location">
    <subcellularLocation>
        <location evidence="1">Nucleus</location>
    </subcellularLocation>
    <subcellularLocation>
        <location evidence="1">Chromosome</location>
        <location evidence="1">Telomere</location>
    </subcellularLocation>
    <text evidence="1">Localizes to nuclear DNA repair foci with other DNA repair proteins in response to DNA double strand breaks.</text>
</comment>
<comment type="similarity">
    <text evidence="6">Belongs to the PI3/PI4-kinase family. ATM subfamily.</text>
</comment>
<comment type="sequence caution" evidence="6">
    <conflict type="erroneous gene model prediction">
        <sequence resource="EMBL-CDS" id="ESU11490"/>
    </conflict>
</comment>
<evidence type="ECO:0000250" key="1"/>
<evidence type="ECO:0000255" key="2">
    <source>
        <dbReference type="PROSITE-ProRule" id="PRU00269"/>
    </source>
</evidence>
<evidence type="ECO:0000255" key="3">
    <source>
        <dbReference type="PROSITE-ProRule" id="PRU00534"/>
    </source>
</evidence>
<evidence type="ECO:0000255" key="4">
    <source>
        <dbReference type="PROSITE-ProRule" id="PRU00535"/>
    </source>
</evidence>
<evidence type="ECO:0000256" key="5">
    <source>
        <dbReference type="SAM" id="MobiDB-lite"/>
    </source>
</evidence>
<evidence type="ECO:0000305" key="6"/>
<gene>
    <name type="primary">TEL1</name>
    <name type="ORF">FGRRES_16493</name>
    <name type="ORF">FGSG_05519</name>
</gene>
<feature type="chain" id="PRO_0000227703" description="Serine/threonine-protein kinase TEL1">
    <location>
        <begin position="1"/>
        <end position="2935"/>
    </location>
</feature>
<feature type="domain" description="FAT" evidence="3">
    <location>
        <begin position="1866"/>
        <end position="2468"/>
    </location>
</feature>
<feature type="domain" description="PI3K/PI4K catalytic" evidence="2">
    <location>
        <begin position="2573"/>
        <end position="2884"/>
    </location>
</feature>
<feature type="domain" description="FATC" evidence="4">
    <location>
        <begin position="2903"/>
        <end position="2935"/>
    </location>
</feature>
<feature type="region of interest" description="Disordered" evidence="5">
    <location>
        <begin position="191"/>
        <end position="222"/>
    </location>
</feature>
<feature type="region of interest" description="G-loop" evidence="2">
    <location>
        <begin position="2579"/>
        <end position="2585"/>
    </location>
</feature>
<feature type="region of interest" description="Catalytic loop" evidence="2">
    <location>
        <begin position="2751"/>
        <end position="2759"/>
    </location>
</feature>
<feature type="region of interest" description="Activation loop" evidence="2">
    <location>
        <begin position="2771"/>
        <end position="2795"/>
    </location>
</feature>
<feature type="region of interest" description="Disordered" evidence="5">
    <location>
        <begin position="2857"/>
        <end position="2889"/>
    </location>
</feature>
<feature type="compositionally biased region" description="Low complexity" evidence="5">
    <location>
        <begin position="194"/>
        <end position="217"/>
    </location>
</feature>
<reference key="1">
    <citation type="journal article" date="2007" name="Science">
        <title>The Fusarium graminearum genome reveals a link between localized polymorphism and pathogen specialization.</title>
        <authorList>
            <person name="Cuomo C.A."/>
            <person name="Gueldener U."/>
            <person name="Xu J.-R."/>
            <person name="Trail F."/>
            <person name="Turgeon B.G."/>
            <person name="Di Pietro A."/>
            <person name="Walton J.D."/>
            <person name="Ma L.-J."/>
            <person name="Baker S.E."/>
            <person name="Rep M."/>
            <person name="Adam G."/>
            <person name="Antoniw J."/>
            <person name="Baldwin T."/>
            <person name="Calvo S.E."/>
            <person name="Chang Y.-L."/>
            <person name="DeCaprio D."/>
            <person name="Gale L.R."/>
            <person name="Gnerre S."/>
            <person name="Goswami R.S."/>
            <person name="Hammond-Kosack K."/>
            <person name="Harris L.J."/>
            <person name="Hilburn K."/>
            <person name="Kennell J.C."/>
            <person name="Kroken S."/>
            <person name="Magnuson J.K."/>
            <person name="Mannhaupt G."/>
            <person name="Mauceli E.W."/>
            <person name="Mewes H.-W."/>
            <person name="Mitterbauer R."/>
            <person name="Muehlbauer G."/>
            <person name="Muensterkoetter M."/>
            <person name="Nelson D."/>
            <person name="O'Donnell K."/>
            <person name="Ouellet T."/>
            <person name="Qi W."/>
            <person name="Quesneville H."/>
            <person name="Roncero M.I.G."/>
            <person name="Seong K.-Y."/>
            <person name="Tetko I.V."/>
            <person name="Urban M."/>
            <person name="Waalwijk C."/>
            <person name="Ward T.J."/>
            <person name="Yao J."/>
            <person name="Birren B.W."/>
            <person name="Kistler H.C."/>
        </authorList>
    </citation>
    <scope>NUCLEOTIDE SEQUENCE [LARGE SCALE GENOMIC DNA]</scope>
    <source>
        <strain>ATCC MYA-4620 / CBS 123657 / FGSC 9075 / NRRL 31084 / PH-1</strain>
    </source>
</reference>
<reference key="2">
    <citation type="journal article" date="2010" name="Nature">
        <title>Comparative genomics reveals mobile pathogenicity chromosomes in Fusarium.</title>
        <authorList>
            <person name="Ma L.-J."/>
            <person name="van der Does H.C."/>
            <person name="Borkovich K.A."/>
            <person name="Coleman J.J."/>
            <person name="Daboussi M.-J."/>
            <person name="Di Pietro A."/>
            <person name="Dufresne M."/>
            <person name="Freitag M."/>
            <person name="Grabherr M."/>
            <person name="Henrissat B."/>
            <person name="Houterman P.M."/>
            <person name="Kang S."/>
            <person name="Shim W.-B."/>
            <person name="Woloshuk C."/>
            <person name="Xie X."/>
            <person name="Xu J.-R."/>
            <person name="Antoniw J."/>
            <person name="Baker S.E."/>
            <person name="Bluhm B.H."/>
            <person name="Breakspear A."/>
            <person name="Brown D.W."/>
            <person name="Butchko R.A.E."/>
            <person name="Chapman S."/>
            <person name="Coulson R."/>
            <person name="Coutinho P.M."/>
            <person name="Danchin E.G.J."/>
            <person name="Diener A."/>
            <person name="Gale L.R."/>
            <person name="Gardiner D.M."/>
            <person name="Goff S."/>
            <person name="Hammond-Kosack K.E."/>
            <person name="Hilburn K."/>
            <person name="Hua-Van A."/>
            <person name="Jonkers W."/>
            <person name="Kazan K."/>
            <person name="Kodira C.D."/>
            <person name="Koehrsen M."/>
            <person name="Kumar L."/>
            <person name="Lee Y.-H."/>
            <person name="Li L."/>
            <person name="Manners J.M."/>
            <person name="Miranda-Saavedra D."/>
            <person name="Mukherjee M."/>
            <person name="Park G."/>
            <person name="Park J."/>
            <person name="Park S.-Y."/>
            <person name="Proctor R.H."/>
            <person name="Regev A."/>
            <person name="Ruiz-Roldan M.C."/>
            <person name="Sain D."/>
            <person name="Sakthikumar S."/>
            <person name="Sykes S."/>
            <person name="Schwartz D.C."/>
            <person name="Turgeon B.G."/>
            <person name="Wapinski I."/>
            <person name="Yoder O."/>
            <person name="Young S."/>
            <person name="Zeng Q."/>
            <person name="Zhou S."/>
            <person name="Galagan J."/>
            <person name="Cuomo C.A."/>
            <person name="Kistler H.C."/>
            <person name="Rep M."/>
        </authorList>
    </citation>
    <scope>GENOME REANNOTATION</scope>
    <source>
        <strain>ATCC MYA-4620 / CBS 123657 / FGSC 9075 / NRRL 31084 / PH-1</strain>
    </source>
</reference>
<reference key="3">
    <citation type="journal article" date="2015" name="BMC Genomics">
        <title>The completed genome sequence of the pathogenic ascomycete fungus Fusarium graminearum.</title>
        <authorList>
            <person name="King R."/>
            <person name="Urban M."/>
            <person name="Hammond-Kosack M.C.U."/>
            <person name="Hassani-Pak K."/>
            <person name="Hammond-Kosack K.E."/>
        </authorList>
    </citation>
    <scope>NUCLEOTIDE SEQUENCE [LARGE SCALE GENOMIC DNA]</scope>
    <source>
        <strain>ATCC MYA-4620 / CBS 123657 / FGSC 9075 / NRRL 31084 / PH-1</strain>
    </source>
</reference>